<sequence>MKFLDQAKIYIRSGNGGAGAVSFRREKFLEFGGPDGGDGGRGGDVWVEAVDGLNTLIDYRYQQHFKAKTGMHGMGRNMTGGKGDDVVLRVPVGTQIFEEDNETLICDITEVGQRYRLAKGGNGGFGNLHFTTSTNRAPRRANPGQEGIERTIWLRLKLIADAGLVGLPNAGKSTFLASVTAAKPKIADYPFTTLHPNLGVARIDGREFVIADIPGLIEGASEGVGLGDRFLGHVERTRVLLHLVSAQEEDVAKAYQVIRGELEAYEHGLADKPEIVALSQVDTLDPETRKAKVKALKKACGCEPLLLSAVSHEGLNDTLRQLARIIDLSRAEEAGTAQAEE</sequence>
<accession>Q8YJ80</accession>
<evidence type="ECO:0000255" key="1">
    <source>
        <dbReference type="HAMAP-Rule" id="MF_01454"/>
    </source>
</evidence>
<evidence type="ECO:0000255" key="2">
    <source>
        <dbReference type="PROSITE-ProRule" id="PRU01231"/>
    </source>
</evidence>
<evidence type="ECO:0000305" key="3"/>
<organism>
    <name type="scientific">Brucella melitensis biotype 1 (strain ATCC 23456 / CCUG 17765 / NCTC 10094 / 16M)</name>
    <dbReference type="NCBI Taxonomy" id="224914"/>
    <lineage>
        <taxon>Bacteria</taxon>
        <taxon>Pseudomonadati</taxon>
        <taxon>Pseudomonadota</taxon>
        <taxon>Alphaproteobacteria</taxon>
        <taxon>Hyphomicrobiales</taxon>
        <taxon>Brucellaceae</taxon>
        <taxon>Brucella/Ochrobactrum group</taxon>
        <taxon>Brucella</taxon>
    </lineage>
</organism>
<dbReference type="EC" id="3.6.5.-" evidence="1"/>
<dbReference type="EMBL" id="AE008917">
    <property type="protein sequence ID" value="AAL51388.1"/>
    <property type="status" value="ALT_INIT"/>
    <property type="molecule type" value="Genomic_DNA"/>
</dbReference>
<dbReference type="PIR" id="AI3277">
    <property type="entry name" value="AI3277"/>
</dbReference>
<dbReference type="SMR" id="Q8YJ80"/>
<dbReference type="KEGG" id="bme:BMEI0206"/>
<dbReference type="KEGG" id="bmel:DK63_1224"/>
<dbReference type="PATRIC" id="fig|224914.52.peg.1296"/>
<dbReference type="eggNOG" id="COG0536">
    <property type="taxonomic scope" value="Bacteria"/>
</dbReference>
<dbReference type="PhylomeDB" id="Q8YJ80"/>
<dbReference type="Proteomes" id="UP000000419">
    <property type="component" value="Chromosome I"/>
</dbReference>
<dbReference type="GO" id="GO:0005737">
    <property type="term" value="C:cytoplasm"/>
    <property type="evidence" value="ECO:0007669"/>
    <property type="project" value="UniProtKB-SubCell"/>
</dbReference>
<dbReference type="GO" id="GO:0005525">
    <property type="term" value="F:GTP binding"/>
    <property type="evidence" value="ECO:0007669"/>
    <property type="project" value="UniProtKB-UniRule"/>
</dbReference>
<dbReference type="GO" id="GO:0003924">
    <property type="term" value="F:GTPase activity"/>
    <property type="evidence" value="ECO:0007669"/>
    <property type="project" value="UniProtKB-UniRule"/>
</dbReference>
<dbReference type="GO" id="GO:0000287">
    <property type="term" value="F:magnesium ion binding"/>
    <property type="evidence" value="ECO:0007669"/>
    <property type="project" value="InterPro"/>
</dbReference>
<dbReference type="GO" id="GO:0042254">
    <property type="term" value="P:ribosome biogenesis"/>
    <property type="evidence" value="ECO:0007669"/>
    <property type="project" value="UniProtKB-UniRule"/>
</dbReference>
<dbReference type="CDD" id="cd01898">
    <property type="entry name" value="Obg"/>
    <property type="match status" value="1"/>
</dbReference>
<dbReference type="FunFam" id="2.70.210.12:FF:000001">
    <property type="entry name" value="GTPase Obg"/>
    <property type="match status" value="1"/>
</dbReference>
<dbReference type="Gene3D" id="2.70.210.12">
    <property type="entry name" value="GTP1/OBG domain"/>
    <property type="match status" value="1"/>
</dbReference>
<dbReference type="Gene3D" id="3.40.50.300">
    <property type="entry name" value="P-loop containing nucleotide triphosphate hydrolases"/>
    <property type="match status" value="1"/>
</dbReference>
<dbReference type="HAMAP" id="MF_01454">
    <property type="entry name" value="GTPase_Obg"/>
    <property type="match status" value="1"/>
</dbReference>
<dbReference type="InterPro" id="IPR031167">
    <property type="entry name" value="G_OBG"/>
</dbReference>
<dbReference type="InterPro" id="IPR006073">
    <property type="entry name" value="GTP-bd"/>
</dbReference>
<dbReference type="InterPro" id="IPR014100">
    <property type="entry name" value="GTP-bd_Obg/CgtA"/>
</dbReference>
<dbReference type="InterPro" id="IPR006074">
    <property type="entry name" value="GTP1-OBG_CS"/>
</dbReference>
<dbReference type="InterPro" id="IPR006169">
    <property type="entry name" value="GTP1_OBG_dom"/>
</dbReference>
<dbReference type="InterPro" id="IPR036726">
    <property type="entry name" value="GTP1_OBG_dom_sf"/>
</dbReference>
<dbReference type="InterPro" id="IPR045086">
    <property type="entry name" value="OBG_GTPase"/>
</dbReference>
<dbReference type="InterPro" id="IPR027417">
    <property type="entry name" value="P-loop_NTPase"/>
</dbReference>
<dbReference type="NCBIfam" id="TIGR02729">
    <property type="entry name" value="Obg_CgtA"/>
    <property type="match status" value="1"/>
</dbReference>
<dbReference type="NCBIfam" id="NF008955">
    <property type="entry name" value="PRK12297.1"/>
    <property type="match status" value="1"/>
</dbReference>
<dbReference type="NCBIfam" id="NF008956">
    <property type="entry name" value="PRK12299.1"/>
    <property type="match status" value="1"/>
</dbReference>
<dbReference type="PANTHER" id="PTHR11702">
    <property type="entry name" value="DEVELOPMENTALLY REGULATED GTP-BINDING PROTEIN-RELATED"/>
    <property type="match status" value="1"/>
</dbReference>
<dbReference type="PANTHER" id="PTHR11702:SF31">
    <property type="entry name" value="MITOCHONDRIAL RIBOSOME-ASSOCIATED GTPASE 2"/>
    <property type="match status" value="1"/>
</dbReference>
<dbReference type="Pfam" id="PF01018">
    <property type="entry name" value="GTP1_OBG"/>
    <property type="match status" value="1"/>
</dbReference>
<dbReference type="Pfam" id="PF01926">
    <property type="entry name" value="MMR_HSR1"/>
    <property type="match status" value="1"/>
</dbReference>
<dbReference type="PIRSF" id="PIRSF002401">
    <property type="entry name" value="GTP_bd_Obg/CgtA"/>
    <property type="match status" value="1"/>
</dbReference>
<dbReference type="PRINTS" id="PR00326">
    <property type="entry name" value="GTP1OBG"/>
</dbReference>
<dbReference type="SUPFAM" id="SSF82051">
    <property type="entry name" value="Obg GTP-binding protein N-terminal domain"/>
    <property type="match status" value="1"/>
</dbReference>
<dbReference type="SUPFAM" id="SSF52540">
    <property type="entry name" value="P-loop containing nucleoside triphosphate hydrolases"/>
    <property type="match status" value="1"/>
</dbReference>
<dbReference type="PROSITE" id="PS51710">
    <property type="entry name" value="G_OBG"/>
    <property type="match status" value="1"/>
</dbReference>
<dbReference type="PROSITE" id="PS00905">
    <property type="entry name" value="GTP1_OBG"/>
    <property type="match status" value="1"/>
</dbReference>
<dbReference type="PROSITE" id="PS51883">
    <property type="entry name" value="OBG"/>
    <property type="match status" value="1"/>
</dbReference>
<name>OBG_BRUME</name>
<keyword id="KW-0963">Cytoplasm</keyword>
<keyword id="KW-0342">GTP-binding</keyword>
<keyword id="KW-0378">Hydrolase</keyword>
<keyword id="KW-0460">Magnesium</keyword>
<keyword id="KW-0479">Metal-binding</keyword>
<keyword id="KW-0547">Nucleotide-binding</keyword>
<protein>
    <recommendedName>
        <fullName evidence="1">GTPase Obg</fullName>
        <ecNumber evidence="1">3.6.5.-</ecNumber>
    </recommendedName>
    <alternativeName>
        <fullName evidence="1">GTP-binding protein Obg</fullName>
    </alternativeName>
</protein>
<feature type="chain" id="PRO_0000385769" description="GTPase Obg">
    <location>
        <begin position="1"/>
        <end position="341"/>
    </location>
</feature>
<feature type="domain" description="Obg" evidence="2">
    <location>
        <begin position="1"/>
        <end position="159"/>
    </location>
</feature>
<feature type="domain" description="OBG-type G" evidence="1">
    <location>
        <begin position="160"/>
        <end position="327"/>
    </location>
</feature>
<feature type="binding site" evidence="1">
    <location>
        <begin position="166"/>
        <end position="173"/>
    </location>
    <ligand>
        <name>GTP</name>
        <dbReference type="ChEBI" id="CHEBI:37565"/>
    </ligand>
</feature>
<feature type="binding site" evidence="1">
    <location>
        <position position="173"/>
    </location>
    <ligand>
        <name>Mg(2+)</name>
        <dbReference type="ChEBI" id="CHEBI:18420"/>
    </ligand>
</feature>
<feature type="binding site" evidence="1">
    <location>
        <begin position="191"/>
        <end position="195"/>
    </location>
    <ligand>
        <name>GTP</name>
        <dbReference type="ChEBI" id="CHEBI:37565"/>
    </ligand>
</feature>
<feature type="binding site" evidence="1">
    <location>
        <position position="193"/>
    </location>
    <ligand>
        <name>Mg(2+)</name>
        <dbReference type="ChEBI" id="CHEBI:18420"/>
    </ligand>
</feature>
<feature type="binding site" evidence="1">
    <location>
        <begin position="212"/>
        <end position="215"/>
    </location>
    <ligand>
        <name>GTP</name>
        <dbReference type="ChEBI" id="CHEBI:37565"/>
    </ligand>
</feature>
<feature type="binding site" evidence="1">
    <location>
        <begin position="279"/>
        <end position="282"/>
    </location>
    <ligand>
        <name>GTP</name>
        <dbReference type="ChEBI" id="CHEBI:37565"/>
    </ligand>
</feature>
<feature type="binding site" evidence="1">
    <location>
        <begin position="308"/>
        <end position="310"/>
    </location>
    <ligand>
        <name>GTP</name>
        <dbReference type="ChEBI" id="CHEBI:37565"/>
    </ligand>
</feature>
<proteinExistence type="inferred from homology"/>
<comment type="function">
    <text evidence="1">An essential GTPase which binds GTP, GDP and possibly (p)ppGpp with moderate affinity, with high nucleotide exchange rates and a fairly low GTP hydrolysis rate. Plays a role in control of the cell cycle, stress response, ribosome biogenesis and in those bacteria that undergo differentiation, in morphogenesis control.</text>
</comment>
<comment type="cofactor">
    <cofactor evidence="1">
        <name>Mg(2+)</name>
        <dbReference type="ChEBI" id="CHEBI:18420"/>
    </cofactor>
</comment>
<comment type="subunit">
    <text evidence="1">Monomer.</text>
</comment>
<comment type="subcellular location">
    <subcellularLocation>
        <location evidence="1">Cytoplasm</location>
    </subcellularLocation>
</comment>
<comment type="similarity">
    <text evidence="1">Belongs to the TRAFAC class OBG-HflX-like GTPase superfamily. OBG GTPase family.</text>
</comment>
<comment type="sequence caution" evidence="3">
    <conflict type="erroneous initiation">
        <sequence resource="EMBL-CDS" id="AAL51388"/>
    </conflict>
    <text>Extended N-terminus.</text>
</comment>
<gene>
    <name evidence="1" type="primary">obg</name>
    <name type="ordered locus">BMEI0206</name>
</gene>
<reference key="1">
    <citation type="journal article" date="2002" name="Proc. Natl. Acad. Sci. U.S.A.">
        <title>The genome sequence of the facultative intracellular pathogen Brucella melitensis.</title>
        <authorList>
            <person name="DelVecchio V.G."/>
            <person name="Kapatral V."/>
            <person name="Redkar R.J."/>
            <person name="Patra G."/>
            <person name="Mujer C."/>
            <person name="Los T."/>
            <person name="Ivanova N."/>
            <person name="Anderson I."/>
            <person name="Bhattacharyya A."/>
            <person name="Lykidis A."/>
            <person name="Reznik G."/>
            <person name="Jablonski L."/>
            <person name="Larsen N."/>
            <person name="D'Souza M."/>
            <person name="Bernal A."/>
            <person name="Mazur M."/>
            <person name="Goltsman E."/>
            <person name="Selkov E."/>
            <person name="Elzer P.H."/>
            <person name="Hagius S."/>
            <person name="O'Callaghan D."/>
            <person name="Letesson J.-J."/>
            <person name="Haselkorn R."/>
            <person name="Kyrpides N.C."/>
            <person name="Overbeek R."/>
        </authorList>
    </citation>
    <scope>NUCLEOTIDE SEQUENCE [LARGE SCALE GENOMIC DNA]</scope>
    <source>
        <strain>ATCC 23456 / CCUG 17765 / NCTC 10094 / 16M</strain>
    </source>
</reference>